<accession>Q8Z2R3</accession>
<accession>Q7C6J4</accession>
<sequence length="139" mass="15219">MKKGTVLNSEISSVISRLGHTDTLVVCDAGLPIPNSTARIDMALTQGVPSFMQVVDVVTWEMQVEAAILATEIKQQNPQLHETLLTHLEQLQQHQGNTIKISYTTHEQFKKLTADSQAVIRSGECSPYANVIICAGVTF</sequence>
<keyword id="KW-0119">Carbohydrate metabolism</keyword>
<keyword id="KW-0963">Cytoplasm</keyword>
<keyword id="KW-0413">Isomerase</keyword>
<dbReference type="EC" id="5.4.99.62" evidence="1"/>
<dbReference type="EMBL" id="AE014613">
    <property type="protein sequence ID" value="AAO71135.1"/>
    <property type="molecule type" value="Genomic_DNA"/>
</dbReference>
<dbReference type="EMBL" id="AL513382">
    <property type="protein sequence ID" value="CAD03114.1"/>
    <property type="molecule type" value="Genomic_DNA"/>
</dbReference>
<dbReference type="RefSeq" id="NP_458062.1">
    <property type="nucleotide sequence ID" value="NC_003198.1"/>
</dbReference>
<dbReference type="RefSeq" id="WP_000715950.1">
    <property type="nucleotide sequence ID" value="NZ_WSUR01000023.1"/>
</dbReference>
<dbReference type="SMR" id="Q8Z2R3"/>
<dbReference type="STRING" id="220341.gene:17587757"/>
<dbReference type="KEGG" id="stt:t3638"/>
<dbReference type="KEGG" id="sty:STY3897"/>
<dbReference type="PATRIC" id="fig|220341.7.peg.3977"/>
<dbReference type="eggNOG" id="COG1869">
    <property type="taxonomic scope" value="Bacteria"/>
</dbReference>
<dbReference type="HOGENOM" id="CLU_135498_0_0_6"/>
<dbReference type="OMA" id="EQTPYAN"/>
<dbReference type="OrthoDB" id="9805009at2"/>
<dbReference type="UniPathway" id="UPA00916">
    <property type="reaction ID" value="UER00888"/>
</dbReference>
<dbReference type="Proteomes" id="UP000000541">
    <property type="component" value="Chromosome"/>
</dbReference>
<dbReference type="Proteomes" id="UP000002670">
    <property type="component" value="Chromosome"/>
</dbReference>
<dbReference type="GO" id="GO:0005829">
    <property type="term" value="C:cytosol"/>
    <property type="evidence" value="ECO:0007669"/>
    <property type="project" value="TreeGrafter"/>
</dbReference>
<dbReference type="GO" id="GO:0062193">
    <property type="term" value="F:D-ribose pyranase activity"/>
    <property type="evidence" value="ECO:0007669"/>
    <property type="project" value="UniProtKB-EC"/>
</dbReference>
<dbReference type="GO" id="GO:0016872">
    <property type="term" value="F:intramolecular lyase activity"/>
    <property type="evidence" value="ECO:0007669"/>
    <property type="project" value="UniProtKB-UniRule"/>
</dbReference>
<dbReference type="GO" id="GO:0048029">
    <property type="term" value="F:monosaccharide binding"/>
    <property type="evidence" value="ECO:0007669"/>
    <property type="project" value="InterPro"/>
</dbReference>
<dbReference type="GO" id="GO:0019303">
    <property type="term" value="P:D-ribose catabolic process"/>
    <property type="evidence" value="ECO:0007669"/>
    <property type="project" value="UniProtKB-UniRule"/>
</dbReference>
<dbReference type="FunFam" id="3.40.1650.10:FF:000002">
    <property type="entry name" value="D-ribose pyranase"/>
    <property type="match status" value="1"/>
</dbReference>
<dbReference type="Gene3D" id="3.40.1650.10">
    <property type="entry name" value="RbsD-like domain"/>
    <property type="match status" value="1"/>
</dbReference>
<dbReference type="HAMAP" id="MF_01661">
    <property type="entry name" value="D_rib_pyranase"/>
    <property type="match status" value="1"/>
</dbReference>
<dbReference type="InterPro" id="IPR023064">
    <property type="entry name" value="D-ribose_pyranase"/>
</dbReference>
<dbReference type="InterPro" id="IPR023750">
    <property type="entry name" value="RbsD-like_sf"/>
</dbReference>
<dbReference type="InterPro" id="IPR007721">
    <property type="entry name" value="RbsD_FucU"/>
</dbReference>
<dbReference type="NCBIfam" id="NF008761">
    <property type="entry name" value="PRK11797.1"/>
    <property type="match status" value="1"/>
</dbReference>
<dbReference type="PANTHER" id="PTHR37831">
    <property type="entry name" value="D-RIBOSE PYRANASE"/>
    <property type="match status" value="1"/>
</dbReference>
<dbReference type="PANTHER" id="PTHR37831:SF1">
    <property type="entry name" value="D-RIBOSE PYRANASE"/>
    <property type="match status" value="1"/>
</dbReference>
<dbReference type="Pfam" id="PF05025">
    <property type="entry name" value="RbsD_FucU"/>
    <property type="match status" value="1"/>
</dbReference>
<dbReference type="SUPFAM" id="SSF102546">
    <property type="entry name" value="RbsD-like"/>
    <property type="match status" value="1"/>
</dbReference>
<comment type="function">
    <text evidence="1">Catalyzes the interconversion of beta-pyran and beta-furan forms of D-ribose.</text>
</comment>
<comment type="catalytic activity">
    <reaction evidence="1">
        <text>beta-D-ribopyranose = beta-D-ribofuranose</text>
        <dbReference type="Rhea" id="RHEA:25432"/>
        <dbReference type="ChEBI" id="CHEBI:27476"/>
        <dbReference type="ChEBI" id="CHEBI:47002"/>
        <dbReference type="EC" id="5.4.99.62"/>
    </reaction>
</comment>
<comment type="pathway">
    <text evidence="1">Carbohydrate metabolism; D-ribose degradation; D-ribose 5-phosphate from beta-D-ribopyranose: step 1/2.</text>
</comment>
<comment type="subunit">
    <text evidence="1">Homodecamer.</text>
</comment>
<comment type="subcellular location">
    <subcellularLocation>
        <location evidence="1">Cytoplasm</location>
    </subcellularLocation>
</comment>
<comment type="similarity">
    <text evidence="1">Belongs to the RbsD / FucU family. RbsD subfamily.</text>
</comment>
<gene>
    <name evidence="1" type="primary">rbsD</name>
    <name type="ordered locus">STY3897</name>
    <name type="ordered locus">t3638</name>
</gene>
<feature type="chain" id="PRO_0000346252" description="D-ribose pyranase">
    <location>
        <begin position="1"/>
        <end position="139"/>
    </location>
</feature>
<feature type="active site" description="Proton donor" evidence="1">
    <location>
        <position position="20"/>
    </location>
</feature>
<feature type="binding site" evidence="1">
    <location>
        <position position="28"/>
    </location>
    <ligand>
        <name>substrate</name>
    </ligand>
</feature>
<feature type="binding site" evidence="1">
    <location>
        <position position="106"/>
    </location>
    <ligand>
        <name>substrate</name>
    </ligand>
</feature>
<feature type="binding site" evidence="1">
    <location>
        <begin position="128"/>
        <end position="130"/>
    </location>
    <ligand>
        <name>substrate</name>
    </ligand>
</feature>
<proteinExistence type="inferred from homology"/>
<protein>
    <recommendedName>
        <fullName evidence="1">D-ribose pyranase</fullName>
        <ecNumber evidence="1">5.4.99.62</ecNumber>
    </recommendedName>
</protein>
<organism>
    <name type="scientific">Salmonella typhi</name>
    <dbReference type="NCBI Taxonomy" id="90370"/>
    <lineage>
        <taxon>Bacteria</taxon>
        <taxon>Pseudomonadati</taxon>
        <taxon>Pseudomonadota</taxon>
        <taxon>Gammaproteobacteria</taxon>
        <taxon>Enterobacterales</taxon>
        <taxon>Enterobacteriaceae</taxon>
        <taxon>Salmonella</taxon>
    </lineage>
</organism>
<evidence type="ECO:0000255" key="1">
    <source>
        <dbReference type="HAMAP-Rule" id="MF_01661"/>
    </source>
</evidence>
<reference key="1">
    <citation type="journal article" date="2001" name="Nature">
        <title>Complete genome sequence of a multiple drug resistant Salmonella enterica serovar Typhi CT18.</title>
        <authorList>
            <person name="Parkhill J."/>
            <person name="Dougan G."/>
            <person name="James K.D."/>
            <person name="Thomson N.R."/>
            <person name="Pickard D."/>
            <person name="Wain J."/>
            <person name="Churcher C.M."/>
            <person name="Mungall K.L."/>
            <person name="Bentley S.D."/>
            <person name="Holden M.T.G."/>
            <person name="Sebaihia M."/>
            <person name="Baker S."/>
            <person name="Basham D."/>
            <person name="Brooks K."/>
            <person name="Chillingworth T."/>
            <person name="Connerton P."/>
            <person name="Cronin A."/>
            <person name="Davis P."/>
            <person name="Davies R.M."/>
            <person name="Dowd L."/>
            <person name="White N."/>
            <person name="Farrar J."/>
            <person name="Feltwell T."/>
            <person name="Hamlin N."/>
            <person name="Haque A."/>
            <person name="Hien T.T."/>
            <person name="Holroyd S."/>
            <person name="Jagels K."/>
            <person name="Krogh A."/>
            <person name="Larsen T.S."/>
            <person name="Leather S."/>
            <person name="Moule S."/>
            <person name="O'Gaora P."/>
            <person name="Parry C."/>
            <person name="Quail M.A."/>
            <person name="Rutherford K.M."/>
            <person name="Simmonds M."/>
            <person name="Skelton J."/>
            <person name="Stevens K."/>
            <person name="Whitehead S."/>
            <person name="Barrell B.G."/>
        </authorList>
    </citation>
    <scope>NUCLEOTIDE SEQUENCE [LARGE SCALE GENOMIC DNA]</scope>
    <source>
        <strain>CT18</strain>
    </source>
</reference>
<reference key="2">
    <citation type="journal article" date="2003" name="J. Bacteriol.">
        <title>Comparative genomics of Salmonella enterica serovar Typhi strains Ty2 and CT18.</title>
        <authorList>
            <person name="Deng W."/>
            <person name="Liou S.-R."/>
            <person name="Plunkett G. III"/>
            <person name="Mayhew G.F."/>
            <person name="Rose D.J."/>
            <person name="Burland V."/>
            <person name="Kodoyianni V."/>
            <person name="Schwartz D.C."/>
            <person name="Blattner F.R."/>
        </authorList>
    </citation>
    <scope>NUCLEOTIDE SEQUENCE [LARGE SCALE GENOMIC DNA]</scope>
    <source>
        <strain>ATCC 700931 / Ty2</strain>
    </source>
</reference>
<name>RBSD_SALTI</name>